<reference key="1">
    <citation type="journal article" date="2007" name="Virology">
        <title>Principal host relationships and evolutionary history of the North American arenaviruses.</title>
        <authorList>
            <person name="Cajimat M.N."/>
            <person name="Milazzo M.L."/>
            <person name="Hess B.D."/>
            <person name="Rood M.P."/>
            <person name="Fulhorst C.F."/>
        </authorList>
    </citation>
    <scope>NUCLEOTIDE SEQUENCE [GENOMIC RNA]</scope>
</reference>
<reference key="2">
    <citation type="journal article" date="2017" name="Crit. Rev. Microbiol.">
        <title>Bunyaviridae RdRps: structure, motifs, and RNA synthesis machinery.</title>
        <authorList>
            <person name="Amroun A."/>
            <person name="Priet S."/>
            <person name="de Lamballerie X."/>
            <person name="Querat G."/>
        </authorList>
    </citation>
    <scope>REVIEW</scope>
</reference>
<reference key="3">
    <citation type="journal article" date="2020" name="Trends Microbiol.">
        <title>The Cap-Snatching Mechanism of Bunyaviruses.</title>
        <authorList>
            <person name="Olschewski S."/>
            <person name="Cusack S."/>
            <person name="Rosenthal M."/>
        </authorList>
    </citation>
    <scope>REVIEW</scope>
</reference>
<protein>
    <recommendedName>
        <fullName evidence="1">RNA-directed RNA polymerase L</fullName>
        <shortName evidence="1">Protein L</shortName>
        <ecNumber evidence="1">2.7.7.48</ecNumber>
    </recommendedName>
    <alternativeName>
        <fullName evidence="1">Large structural protein</fullName>
    </alternativeName>
    <alternativeName>
        <fullName evidence="1">Replicase</fullName>
    </alternativeName>
    <alternativeName>
        <fullName evidence="1">Transcriptase</fullName>
    </alternativeName>
    <domain>
        <recommendedName>
            <fullName evidence="1">cap-snatching endonuclease</fullName>
            <ecNumber evidence="1">3.1.-.-</ecNumber>
        </recommendedName>
    </domain>
</protein>
<evidence type="ECO:0000255" key="1">
    <source>
        <dbReference type="HAMAP-Rule" id="MF_04086"/>
    </source>
</evidence>
<organism>
    <name type="scientific">Bear Canyon mammarenavirus (isolate Mouse/United States/AV A0070039/2000)</name>
    <name type="common">BCNV</name>
    <dbReference type="NCBI Taxonomy" id="3052298"/>
    <lineage>
        <taxon>Viruses</taxon>
        <taxon>Riboviria</taxon>
        <taxon>Orthornavirae</taxon>
        <taxon>Negarnaviricota</taxon>
        <taxon>Polyploviricotina</taxon>
        <taxon>Ellioviricetes</taxon>
        <taxon>Bunyavirales</taxon>
        <taxon>Arenaviridae</taxon>
        <taxon>Mammarenavirus</taxon>
    </lineage>
</organism>
<feature type="chain" id="PRO_0000361633" description="RNA-directed RNA polymerase L">
    <location>
        <begin position="1"/>
        <end position="2216"/>
    </location>
</feature>
<feature type="domain" description="RdRp catalytic" evidence="1">
    <location>
        <begin position="1167"/>
        <end position="1364"/>
    </location>
</feature>
<feature type="region of interest" description="Endonuclease" evidence="1">
    <location>
        <begin position="26"/>
        <end position="289"/>
    </location>
</feature>
<feature type="active site" evidence="1">
    <location>
        <position position="114"/>
    </location>
</feature>
<feature type="binding site" evidence="1">
    <location>
        <position position="51"/>
    </location>
    <ligand>
        <name>Mn(2+)</name>
        <dbReference type="ChEBI" id="CHEBI:29035"/>
        <label>1</label>
    </ligand>
</feature>
<feature type="binding site" evidence="1">
    <location>
        <position position="88"/>
    </location>
    <ligand>
        <name>Mn(2+)</name>
        <dbReference type="ChEBI" id="CHEBI:29035"/>
        <label>1</label>
    </ligand>
</feature>
<feature type="binding site" evidence="1">
    <location>
        <position position="88"/>
    </location>
    <ligand>
        <name>Mn(2+)</name>
        <dbReference type="ChEBI" id="CHEBI:29035"/>
        <label>2</label>
    </ligand>
</feature>
<feature type="binding site" evidence="1">
    <location>
        <position position="101"/>
    </location>
    <ligand>
        <name>Mn(2+)</name>
        <dbReference type="ChEBI" id="CHEBI:29035"/>
        <label>1</label>
    </ligand>
</feature>
<feature type="binding site" evidence="1">
    <location>
        <position position="1323"/>
    </location>
    <ligand>
        <name>Mg(2+)</name>
        <dbReference type="ChEBI" id="CHEBI:18420"/>
        <note>catalytic; for RdRp activity</note>
    </ligand>
</feature>
<gene>
    <name evidence="1" type="primary">L</name>
</gene>
<organismHost>
    <name type="scientific">Peromyscus californicus</name>
    <name type="common">California mouse</name>
    <dbReference type="NCBI Taxonomy" id="42520"/>
</organismHost>
<comment type="function">
    <text evidence="1">RNA-dependent RNA polymerase, which is responsible for the replication and transcription of the viral RNA genome using antigenomic RNA as an intermediate. During transcription, synthesizes subgenomic RNAs and assures their capping by a cap-snatching mechanism, which involves the endonuclease activity cleaving the host capped pre-mRNAs. These short capped RNAs are then used as primers for viral transcription. The 3'-end of subgenomic mRNAs molecules are heterogeneous and not polyadenylated. The replicase function is to direct synthesis of antigenomic and genomic RNA which are encapsidated and non capped. As a consequence of the use of the same enzyme for both transcription and replication, these mechanisms need to be well coordinated. These processes may be regulated by proteins N and Z in a dose-dependent manner. Z protein inhibits the viral polymerase L und thus the viral transcription and RNA synthesis.</text>
</comment>
<comment type="catalytic activity">
    <reaction evidence="1">
        <text>RNA(n) + a ribonucleoside 5'-triphosphate = RNA(n+1) + diphosphate</text>
        <dbReference type="Rhea" id="RHEA:21248"/>
        <dbReference type="Rhea" id="RHEA-COMP:14527"/>
        <dbReference type="Rhea" id="RHEA-COMP:17342"/>
        <dbReference type="ChEBI" id="CHEBI:33019"/>
        <dbReference type="ChEBI" id="CHEBI:61557"/>
        <dbReference type="ChEBI" id="CHEBI:140395"/>
        <dbReference type="EC" id="2.7.7.48"/>
    </reaction>
</comment>
<comment type="cofactor">
    <cofactor evidence="1">
        <name>Mn(2+)</name>
        <dbReference type="ChEBI" id="CHEBI:29035"/>
    </cofactor>
    <text evidence="1">For endonuclease activity. Binds 2 Mn(2+) ions in the active site. The divalent metal ions are crucial for catalytic activity.</text>
</comment>
<comment type="cofactor">
    <cofactor evidence="1">
        <name>Mg(2+)</name>
        <dbReference type="ChEBI" id="CHEBI:18420"/>
    </cofactor>
    <cofactor evidence="1">
        <name>Mn(2+)</name>
        <dbReference type="ChEBI" id="CHEBI:29035"/>
    </cofactor>
    <text evidence="1">For polymerase activity.</text>
</comment>
<comment type="subunit">
    <text evidence="1">Homomultimer; the oligomeric structure is essential for the polymerase activity. Interacts with nucleoprotein N. Interacts with protein Z; this interaction inhibits viral transcription and replication, Z partially blocks the product exit tunnel for the releasing nascent RNA product.</text>
</comment>
<comment type="subcellular location">
    <subcellularLocation>
        <location evidence="1">Virion</location>
    </subcellularLocation>
    <subcellularLocation>
        <location evidence="1">Host cytoplasm</location>
    </subcellularLocation>
</comment>
<comment type="domain">
    <text evidence="1">The N-terminus contains the endonuclease activity (endoN). The central region contains the RdRp activity.</text>
</comment>
<comment type="miscellaneous">
    <text evidence="1">Classified as His(-) endonuclease since it does not have a histidine upstream of the active site that coordinates the first cation. His(-) endonucleases display very low activity in vitro, although they are clearly active in vivo.</text>
</comment>
<comment type="similarity">
    <text evidence="1">Belongs to the Bunyavirales RNA polymerase family.</text>
</comment>
<accession>A0PJ24</accession>
<dbReference type="EC" id="2.7.7.48" evidence="1"/>
<dbReference type="EC" id="3.1.-.-" evidence="1"/>
<dbReference type="EMBL" id="AY924390">
    <property type="protein sequence ID" value="AAX99344.1"/>
    <property type="molecule type" value="Genomic_RNA"/>
</dbReference>
<dbReference type="RefSeq" id="YP_001649225.1">
    <property type="nucleotide sequence ID" value="NC_010255.1"/>
</dbReference>
<dbReference type="SMR" id="A0PJ24"/>
<dbReference type="KEGG" id="vg:5848382"/>
<dbReference type="Proteomes" id="UP000172257">
    <property type="component" value="Genome"/>
</dbReference>
<dbReference type="GO" id="GO:0030430">
    <property type="term" value="C:host cell cytoplasm"/>
    <property type="evidence" value="ECO:0007669"/>
    <property type="project" value="UniProtKB-SubCell"/>
</dbReference>
<dbReference type="GO" id="GO:0044423">
    <property type="term" value="C:virion component"/>
    <property type="evidence" value="ECO:0007669"/>
    <property type="project" value="UniProtKB-KW"/>
</dbReference>
<dbReference type="GO" id="GO:0016787">
    <property type="term" value="F:hydrolase activity"/>
    <property type="evidence" value="ECO:0007669"/>
    <property type="project" value="UniProtKB-KW"/>
</dbReference>
<dbReference type="GO" id="GO:0046872">
    <property type="term" value="F:metal ion binding"/>
    <property type="evidence" value="ECO:0007669"/>
    <property type="project" value="UniProtKB-KW"/>
</dbReference>
<dbReference type="GO" id="GO:0000166">
    <property type="term" value="F:nucleotide binding"/>
    <property type="evidence" value="ECO:0007669"/>
    <property type="project" value="UniProtKB-UniRule"/>
</dbReference>
<dbReference type="GO" id="GO:0003968">
    <property type="term" value="F:RNA-directed RNA polymerase activity"/>
    <property type="evidence" value="ECO:0007669"/>
    <property type="project" value="UniProtKB-UniRule"/>
</dbReference>
<dbReference type="GO" id="GO:0075526">
    <property type="term" value="P:cap snatching"/>
    <property type="evidence" value="ECO:0007669"/>
    <property type="project" value="UniProtKB-UniRule"/>
</dbReference>
<dbReference type="GO" id="GO:0039689">
    <property type="term" value="P:negative stranded viral RNA replication"/>
    <property type="evidence" value="ECO:0000250"/>
    <property type="project" value="UniProtKB"/>
</dbReference>
<dbReference type="GO" id="GO:0039696">
    <property type="term" value="P:RNA-templated viral transcription"/>
    <property type="evidence" value="ECO:0000250"/>
    <property type="project" value="UniProtKB"/>
</dbReference>
<dbReference type="FunFam" id="3.30.70.2640:FF:000001">
    <property type="entry name" value="RNA-directed RNA polymerase L"/>
    <property type="match status" value="1"/>
</dbReference>
<dbReference type="Gene3D" id="3.30.70.2640">
    <property type="entry name" value="Arenavirus RNA polymerase"/>
    <property type="match status" value="1"/>
</dbReference>
<dbReference type="Gene3D" id="1.20.1440.300">
    <property type="entry name" value="RNA-directed RNA polymerase L, helical domain"/>
    <property type="match status" value="1"/>
</dbReference>
<dbReference type="HAMAP" id="MF_04086">
    <property type="entry name" value="ARENA_L"/>
    <property type="match status" value="1"/>
</dbReference>
<dbReference type="InterPro" id="IPR026382">
    <property type="entry name" value="CapSnatch_arenavir"/>
</dbReference>
<dbReference type="InterPro" id="IPR048006">
    <property type="entry name" value="CapSnatch_bunyavir"/>
</dbReference>
<dbReference type="InterPro" id="IPR007099">
    <property type="entry name" value="RNA-dir_pol_NSvirus"/>
</dbReference>
<dbReference type="InterPro" id="IPR010453">
    <property type="entry name" value="RNA_pol_arenavir"/>
</dbReference>
<dbReference type="NCBIfam" id="TIGR04202">
    <property type="entry name" value="capSnatchArena"/>
    <property type="match status" value="1"/>
</dbReference>
<dbReference type="Pfam" id="PF06317">
    <property type="entry name" value="Arena_RNA_pol"/>
    <property type="match status" value="1"/>
</dbReference>
<dbReference type="Pfam" id="PF17296">
    <property type="entry name" value="ArenaCapSnatch"/>
    <property type="match status" value="1"/>
</dbReference>
<dbReference type="PIRSF" id="PIRSF000836">
    <property type="entry name" value="L_ArenaV"/>
    <property type="match status" value="1"/>
</dbReference>
<dbReference type="PROSITE" id="PS50525">
    <property type="entry name" value="RDRP_SSRNA_NEG_SEG"/>
    <property type="match status" value="1"/>
</dbReference>
<proteinExistence type="inferred from homology"/>
<keyword id="KW-1157">Cap snatching</keyword>
<keyword id="KW-1035">Host cytoplasm</keyword>
<keyword id="KW-0378">Hydrolase</keyword>
<keyword id="KW-0460">Magnesium</keyword>
<keyword id="KW-0464">Manganese</keyword>
<keyword id="KW-0479">Metal-binding</keyword>
<keyword id="KW-0547">Nucleotide-binding</keyword>
<keyword id="KW-0548">Nucleotidyltransferase</keyword>
<keyword id="KW-0696">RNA-directed RNA polymerase</keyword>
<keyword id="KW-0808">Transferase</keyword>
<keyword id="KW-0693">Viral RNA replication</keyword>
<keyword id="KW-0946">Virion</keyword>
<name>L_BCNVU</name>
<sequence>MSEYLDELKELIRKWIPDEEMYIEQKTSFLSQVNLRSVVIEGLKLLSIIIEIDSCKKHGCVHNKNKTVNQILRDHRIVGPTLPDVVPDGYRVIGSTIILLEAFVRVSHESFEIKYKSDFEKLMQLSKDLSRCGLTLIPVVDGRSNYYTEHFPDWTIERMRWLILKITNFLRDNGEEIEELEYSRLVYSLSNMENKNLGLESLKILKEEGLDYKAKLMSVMRDGVNSNMSASECRVEMAKIYDQFSFLRKNGLYKDVYCKTSRTEIINWLKDHKLILLSGETRTAMLDERQCGYCRNHMFRILASLIKNKRHYQSLTNPKKCGSIQSHKKLLSDCNKIKGLKVLNTRRFTLLCLDVIILNSLLELIDAGEIDNEFLVNNHFKSVNDRLVSIDLIIDRLNKKLMSKPNWIGSVKYKMKRTLEIHGLYYVSKWLKQVDIDSWYEFKMMREHSDKCVKPTLKYKKDAARKCGQPEFGSSTILDDEVFLEYLEALSTLSLGLVNSMKTSSAAKFLINDKSNYFGTVQCNECYFQDLDKSYNSLLIYQKTGERSRCYGLMFKSEQFENVYEVGESFYADPKRFFLPIMSSEVILKMCVEMLSWLDWLSEQELKAFKSKLYTLIINILTVPSKRVQVYLQGFRYLIMAFVNELHFKELQNKLKVQPLTISECYVFTLMDDLVHLLLTEAQEENMSKVFRFVLNLSYLCHLVTKETPDRLTDQIKCFEKFLEPKVDFNSVFVNLDSSPHLSGEVEEKFIKDLNRLFSKDLGVEDLKDPGISKELISLCASCFNCGLLPMSKVLKHDPQSPSFTSTALDISSNKSVVVPKLDEVGETVTQYDYQSLLSSTVVDMAQSFKDKLKYKLDRKSIQFAIFKRLTNMVLKRKTDHDVKDDLDDELSEIVDDDTLRVINDVEANVSECLSKMGKISRAATVGGQNNLGRFEKIDTLKRLWDRESMNFILMETSLHEVKDFDPSIFPIEKYKSMCELVYDSKMKSEFFTDEVLKFCPLDLLVKNLATKCYLEEDFFECFKYILISAGFDNRVGRYDHRSRSRLGFKDEAILIKENSRISSRESNSEAISRRLDKSFFTNSSLRNLCFYSEESPTYRSTVSSSVGKLKFGLSYKEQVGSNRELYVGDLNTKLTSRLIEDYFESLTSECKFSCLNNDAEFERALLDMKCVVRLSGLAVSMDHSKWGPYMSPAIFNILFSNLNLELNDGVFIDKAPIENLLNWHLHKIVEVPYNVIDAYLKGYTKRRLGLMDRSSTSITEDFIFNWFAKGVVPSHISSVLDMGQGILHNTSDYYGLLTEQFILQCLDFIFDIKSTAYTSSDDEILLSNSPSLKKVDEDSLDINKCQEVLEFHNYLSSKFNKFVSPKTVAGSFASEFKSRFFIWSQEVPLLTKFVAAALHNVKAKSPHQLAETVDTILDQCIANGVSIEVVKAISRRTNKLITYSGHPKNPFLCVENTDLKDWVDGSRGYRLQRSVESLFNDDDLPLTIRNSCRSLFHRIRSGDIQEEFLINALQTSPDECLAKMLRLSDVDESTIDKVLEFRWLNLRAHGDLRLVLRTKVMSGTRILDREEVPSLVKSVQSKLSKNFVRGAKKIITDAINKSAFQSSICSGFIGFCKSMGSKCVRDGNGSFQYIKHFLKSIILHSHCEVCKPEMSVFCRAALEELKPFSRPIFWDYFSLTFSNACELGNWVFSNVTIPKRTPTTVNPNFFWPVKPGSHTELEDKVNMNHVLYSIKRNFPDLFDEHIAPFLSDLNSLKISWIQRIKFLDLCVAMDMSSECLGIISHIMRRKREELYIVKQNELSVAHMRDSSPMEAGYQLNSSEICHNFLCQLVFESMLHPVLLTTGQFKKYFWFGEVELLPNEADHDLGQLTQFVMDCKTLNISRCMSLDDLDVGYVHSSILMGDIYVNFSSFLHLLDWENRRNYKTFDEIILCSREDTIPMEIDFTISHSRKSFKFKYERKTNYHIKSKVLVQKVDIEEAQNQGFDILELEVHEIECFVSGSQGNHISLDGVGLIPLHPLFSGKEFLDVNKLLIKQDENFESTHSVFSKVKLNFSNHTKDLKNKYSYKLQGPEYNMNPLHLYRGQIMENNFVISRLDVQITSRSVFLALEALESEDRIPFLISLHIYTRSNNKKENSCFIRMTQSDLCLLIDSYEKEFTEVLKSLSDWMDFGDFALCFSNNLNCIMIADPDGQFKLKGRQCRKVSSASAPLEID</sequence>